<feature type="chain" id="PRO_0000060437" description="tRNA (guanine-N(1)-)-methyltransferase">
    <location>
        <begin position="1"/>
        <end position="250"/>
    </location>
</feature>
<feature type="binding site" evidence="1">
    <location>
        <position position="116"/>
    </location>
    <ligand>
        <name>S-adenosyl-L-methionine</name>
        <dbReference type="ChEBI" id="CHEBI:59789"/>
    </ligand>
</feature>
<feature type="binding site" evidence="1">
    <location>
        <begin position="136"/>
        <end position="141"/>
    </location>
    <ligand>
        <name>S-adenosyl-L-methionine</name>
        <dbReference type="ChEBI" id="CHEBI:59789"/>
    </ligand>
</feature>
<reference key="1">
    <citation type="journal article" date="2003" name="Proc. Natl. Acad. Sci. U.S.A.">
        <title>The complete genome sequence of the Arabidopsis and tomato pathogen Pseudomonas syringae pv. tomato DC3000.</title>
        <authorList>
            <person name="Buell C.R."/>
            <person name="Joardar V."/>
            <person name="Lindeberg M."/>
            <person name="Selengut J."/>
            <person name="Paulsen I.T."/>
            <person name="Gwinn M.L."/>
            <person name="Dodson R.J."/>
            <person name="DeBoy R.T."/>
            <person name="Durkin A.S."/>
            <person name="Kolonay J.F."/>
            <person name="Madupu R."/>
            <person name="Daugherty S.C."/>
            <person name="Brinkac L.M."/>
            <person name="Beanan M.J."/>
            <person name="Haft D.H."/>
            <person name="Nelson W.C."/>
            <person name="Davidsen T.M."/>
            <person name="Zafar N."/>
            <person name="Zhou L."/>
            <person name="Liu J."/>
            <person name="Yuan Q."/>
            <person name="Khouri H.M."/>
            <person name="Fedorova N.B."/>
            <person name="Tran B."/>
            <person name="Russell D."/>
            <person name="Berry K.J."/>
            <person name="Utterback T.R."/>
            <person name="Van Aken S.E."/>
            <person name="Feldblyum T.V."/>
            <person name="D'Ascenzo M."/>
            <person name="Deng W.-L."/>
            <person name="Ramos A.R."/>
            <person name="Alfano J.R."/>
            <person name="Cartinhour S."/>
            <person name="Chatterjee A.K."/>
            <person name="Delaney T.P."/>
            <person name="Lazarowitz S.G."/>
            <person name="Martin G.B."/>
            <person name="Schneider D.J."/>
            <person name="Tang X."/>
            <person name="Bender C.L."/>
            <person name="White O."/>
            <person name="Fraser C.M."/>
            <person name="Collmer A."/>
        </authorList>
    </citation>
    <scope>NUCLEOTIDE SEQUENCE [LARGE SCALE GENOMIC DNA]</scope>
    <source>
        <strain>ATCC BAA-871 / DC3000</strain>
    </source>
</reference>
<evidence type="ECO:0000255" key="1">
    <source>
        <dbReference type="HAMAP-Rule" id="MF_00605"/>
    </source>
</evidence>
<gene>
    <name evidence="1" type="primary">trmD</name>
    <name type="ordered locus">PSPTO_1475</name>
</gene>
<protein>
    <recommendedName>
        <fullName evidence="1">tRNA (guanine-N(1)-)-methyltransferase</fullName>
        <ecNumber evidence="1">2.1.1.228</ecNumber>
    </recommendedName>
    <alternativeName>
        <fullName evidence="1">M1G-methyltransferase</fullName>
    </alternativeName>
    <alternativeName>
        <fullName evidence="1">tRNA [GM37] methyltransferase</fullName>
    </alternativeName>
</protein>
<name>TRMD_PSESM</name>
<sequence length="250" mass="28031">MASLRIEVISLFPEMFSAISEYGITSRAVKQGLLQLTCWNPRDYTTDRHHTVDDRPFGGGPGMVMKIKPLEDALVQARQAAGDAAKVIYLSPQGRQLNQAAVRELAQEEAIILIAGRYEGIDERFIEAHVDEEWSIGDYVLSGGELPAMVLIDAVTRLLPGALGHVDSAEEDSFTDGLLDCPHYTRPEVYADQRVPDVLLSGNHAHIRRWRLQQSLGRTYERRADLLESRSLSGEEKKLLAEYIRERDDS</sequence>
<organism>
    <name type="scientific">Pseudomonas syringae pv. tomato (strain ATCC BAA-871 / DC3000)</name>
    <dbReference type="NCBI Taxonomy" id="223283"/>
    <lineage>
        <taxon>Bacteria</taxon>
        <taxon>Pseudomonadati</taxon>
        <taxon>Pseudomonadota</taxon>
        <taxon>Gammaproteobacteria</taxon>
        <taxon>Pseudomonadales</taxon>
        <taxon>Pseudomonadaceae</taxon>
        <taxon>Pseudomonas</taxon>
    </lineage>
</organism>
<accession>Q886V0</accession>
<proteinExistence type="inferred from homology"/>
<comment type="function">
    <text evidence="1">Specifically methylates guanosine-37 in various tRNAs.</text>
</comment>
<comment type="catalytic activity">
    <reaction evidence="1">
        <text>guanosine(37) in tRNA + S-adenosyl-L-methionine = N(1)-methylguanosine(37) in tRNA + S-adenosyl-L-homocysteine + H(+)</text>
        <dbReference type="Rhea" id="RHEA:36899"/>
        <dbReference type="Rhea" id="RHEA-COMP:10145"/>
        <dbReference type="Rhea" id="RHEA-COMP:10147"/>
        <dbReference type="ChEBI" id="CHEBI:15378"/>
        <dbReference type="ChEBI" id="CHEBI:57856"/>
        <dbReference type="ChEBI" id="CHEBI:59789"/>
        <dbReference type="ChEBI" id="CHEBI:73542"/>
        <dbReference type="ChEBI" id="CHEBI:74269"/>
        <dbReference type="EC" id="2.1.1.228"/>
    </reaction>
</comment>
<comment type="subunit">
    <text evidence="1">Homodimer.</text>
</comment>
<comment type="subcellular location">
    <subcellularLocation>
        <location evidence="1">Cytoplasm</location>
    </subcellularLocation>
</comment>
<comment type="similarity">
    <text evidence="1">Belongs to the RNA methyltransferase TrmD family.</text>
</comment>
<keyword id="KW-0963">Cytoplasm</keyword>
<keyword id="KW-0489">Methyltransferase</keyword>
<keyword id="KW-1185">Reference proteome</keyword>
<keyword id="KW-0949">S-adenosyl-L-methionine</keyword>
<keyword id="KW-0808">Transferase</keyword>
<keyword id="KW-0819">tRNA processing</keyword>
<dbReference type="EC" id="2.1.1.228" evidence="1"/>
<dbReference type="EMBL" id="AE016853">
    <property type="protein sequence ID" value="AAO54996.1"/>
    <property type="molecule type" value="Genomic_DNA"/>
</dbReference>
<dbReference type="RefSeq" id="NP_791301.1">
    <property type="nucleotide sequence ID" value="NC_004578.1"/>
</dbReference>
<dbReference type="RefSeq" id="WP_005765874.1">
    <property type="nucleotide sequence ID" value="NC_004578.1"/>
</dbReference>
<dbReference type="SMR" id="Q886V0"/>
<dbReference type="STRING" id="223283.PSPTO_1475"/>
<dbReference type="GeneID" id="1183112"/>
<dbReference type="KEGG" id="pst:PSPTO_1475"/>
<dbReference type="PATRIC" id="fig|223283.9.peg.1496"/>
<dbReference type="eggNOG" id="COG0336">
    <property type="taxonomic scope" value="Bacteria"/>
</dbReference>
<dbReference type="HOGENOM" id="CLU_047363_0_2_6"/>
<dbReference type="OrthoDB" id="9807416at2"/>
<dbReference type="PhylomeDB" id="Q886V0"/>
<dbReference type="Proteomes" id="UP000002515">
    <property type="component" value="Chromosome"/>
</dbReference>
<dbReference type="GO" id="GO:0005829">
    <property type="term" value="C:cytosol"/>
    <property type="evidence" value="ECO:0007669"/>
    <property type="project" value="TreeGrafter"/>
</dbReference>
<dbReference type="GO" id="GO:0052906">
    <property type="term" value="F:tRNA (guanine(37)-N1)-methyltransferase activity"/>
    <property type="evidence" value="ECO:0007669"/>
    <property type="project" value="UniProtKB-UniRule"/>
</dbReference>
<dbReference type="GO" id="GO:0002939">
    <property type="term" value="P:tRNA N1-guanine methylation"/>
    <property type="evidence" value="ECO:0007669"/>
    <property type="project" value="TreeGrafter"/>
</dbReference>
<dbReference type="CDD" id="cd18080">
    <property type="entry name" value="TrmD-like"/>
    <property type="match status" value="1"/>
</dbReference>
<dbReference type="FunFam" id="1.10.1270.20:FF:000001">
    <property type="entry name" value="tRNA (guanine-N(1)-)-methyltransferase"/>
    <property type="match status" value="1"/>
</dbReference>
<dbReference type="FunFam" id="3.40.1280.10:FF:000001">
    <property type="entry name" value="tRNA (guanine-N(1)-)-methyltransferase"/>
    <property type="match status" value="1"/>
</dbReference>
<dbReference type="Gene3D" id="3.40.1280.10">
    <property type="match status" value="1"/>
</dbReference>
<dbReference type="Gene3D" id="1.10.1270.20">
    <property type="entry name" value="tRNA(m1g37)methyltransferase, domain 2"/>
    <property type="match status" value="1"/>
</dbReference>
<dbReference type="HAMAP" id="MF_00605">
    <property type="entry name" value="TrmD"/>
    <property type="match status" value="1"/>
</dbReference>
<dbReference type="InterPro" id="IPR029028">
    <property type="entry name" value="Alpha/beta_knot_MTases"/>
</dbReference>
<dbReference type="InterPro" id="IPR023148">
    <property type="entry name" value="tRNA_m1G_MeTrfase_C_sf"/>
</dbReference>
<dbReference type="InterPro" id="IPR002649">
    <property type="entry name" value="tRNA_m1G_MeTrfase_TrmD"/>
</dbReference>
<dbReference type="InterPro" id="IPR029026">
    <property type="entry name" value="tRNA_m1G_MTases_N"/>
</dbReference>
<dbReference type="InterPro" id="IPR016009">
    <property type="entry name" value="tRNA_MeTrfase_TRMD/TRM10"/>
</dbReference>
<dbReference type="NCBIfam" id="NF000648">
    <property type="entry name" value="PRK00026.1"/>
    <property type="match status" value="1"/>
</dbReference>
<dbReference type="NCBIfam" id="TIGR00088">
    <property type="entry name" value="trmD"/>
    <property type="match status" value="1"/>
</dbReference>
<dbReference type="PANTHER" id="PTHR46417">
    <property type="entry name" value="TRNA (GUANINE-N(1)-)-METHYLTRANSFERASE"/>
    <property type="match status" value="1"/>
</dbReference>
<dbReference type="PANTHER" id="PTHR46417:SF1">
    <property type="entry name" value="TRNA (GUANINE-N(1)-)-METHYLTRANSFERASE"/>
    <property type="match status" value="1"/>
</dbReference>
<dbReference type="Pfam" id="PF01746">
    <property type="entry name" value="tRNA_m1G_MT"/>
    <property type="match status" value="1"/>
</dbReference>
<dbReference type="PIRSF" id="PIRSF000386">
    <property type="entry name" value="tRNA_mtase"/>
    <property type="match status" value="1"/>
</dbReference>
<dbReference type="SUPFAM" id="SSF75217">
    <property type="entry name" value="alpha/beta knot"/>
    <property type="match status" value="1"/>
</dbReference>